<gene>
    <name evidence="1" type="primary">nuoI</name>
    <name type="ordered locus">C8J_1468</name>
</gene>
<name>NUOI_CAMJ8</name>
<keyword id="KW-0004">4Fe-4S</keyword>
<keyword id="KW-0997">Cell inner membrane</keyword>
<keyword id="KW-1003">Cell membrane</keyword>
<keyword id="KW-0408">Iron</keyword>
<keyword id="KW-0411">Iron-sulfur</keyword>
<keyword id="KW-0472">Membrane</keyword>
<keyword id="KW-0479">Metal-binding</keyword>
<keyword id="KW-0520">NAD</keyword>
<keyword id="KW-0874">Quinone</keyword>
<keyword id="KW-0677">Repeat</keyword>
<keyword id="KW-1278">Translocase</keyword>
<keyword id="KW-0830">Ubiquinone</keyword>
<comment type="function">
    <text evidence="1">NDH-1 shuttles electrons from NADH, via FMN and iron-sulfur (Fe-S) centers, to quinones in the respiratory chain. The immediate electron acceptor for the enzyme in this species is believed to be ubiquinone. Couples the redox reaction to proton translocation (for every two electrons transferred, four hydrogen ions are translocated across the cytoplasmic membrane), and thus conserves the redox energy in a proton gradient.</text>
</comment>
<comment type="catalytic activity">
    <reaction evidence="1">
        <text>a quinone + NADH + 5 H(+)(in) = a quinol + NAD(+) + 4 H(+)(out)</text>
        <dbReference type="Rhea" id="RHEA:57888"/>
        <dbReference type="ChEBI" id="CHEBI:15378"/>
        <dbReference type="ChEBI" id="CHEBI:24646"/>
        <dbReference type="ChEBI" id="CHEBI:57540"/>
        <dbReference type="ChEBI" id="CHEBI:57945"/>
        <dbReference type="ChEBI" id="CHEBI:132124"/>
    </reaction>
</comment>
<comment type="cofactor">
    <cofactor evidence="1">
        <name>[4Fe-4S] cluster</name>
        <dbReference type="ChEBI" id="CHEBI:49883"/>
    </cofactor>
    <text evidence="1">Binds 2 [4Fe-4S] clusters per subunit.</text>
</comment>
<comment type="subunit">
    <text evidence="1">NDH-1 is composed of 14 different subunits. Subunits NuoA, H, J, K, L, M, N constitute the membrane sector of the complex.</text>
</comment>
<comment type="subcellular location">
    <subcellularLocation>
        <location evidence="1">Cell inner membrane</location>
        <topology evidence="1">Peripheral membrane protein</topology>
    </subcellularLocation>
</comment>
<comment type="similarity">
    <text evidence="1">Belongs to the complex I 23 kDa subunit family.</text>
</comment>
<dbReference type="EC" id="7.1.1.-" evidence="1"/>
<dbReference type="EMBL" id="CP000814">
    <property type="protein sequence ID" value="ABV53066.1"/>
    <property type="molecule type" value="Genomic_DNA"/>
</dbReference>
<dbReference type="RefSeq" id="WP_002866860.1">
    <property type="nucleotide sequence ID" value="NC_009839.1"/>
</dbReference>
<dbReference type="SMR" id="A8FNM9"/>
<dbReference type="KEGG" id="cju:C8J_1468"/>
<dbReference type="HOGENOM" id="CLU_067218_4_1_7"/>
<dbReference type="GO" id="GO:0005886">
    <property type="term" value="C:plasma membrane"/>
    <property type="evidence" value="ECO:0007669"/>
    <property type="project" value="UniProtKB-SubCell"/>
</dbReference>
<dbReference type="GO" id="GO:0051539">
    <property type="term" value="F:4 iron, 4 sulfur cluster binding"/>
    <property type="evidence" value="ECO:0007669"/>
    <property type="project" value="UniProtKB-KW"/>
</dbReference>
<dbReference type="GO" id="GO:0005506">
    <property type="term" value="F:iron ion binding"/>
    <property type="evidence" value="ECO:0007669"/>
    <property type="project" value="UniProtKB-UniRule"/>
</dbReference>
<dbReference type="GO" id="GO:0050136">
    <property type="term" value="F:NADH:ubiquinone reductase (non-electrogenic) activity"/>
    <property type="evidence" value="ECO:0007669"/>
    <property type="project" value="UniProtKB-UniRule"/>
</dbReference>
<dbReference type="GO" id="GO:0048038">
    <property type="term" value="F:quinone binding"/>
    <property type="evidence" value="ECO:0007669"/>
    <property type="project" value="UniProtKB-KW"/>
</dbReference>
<dbReference type="GO" id="GO:0009060">
    <property type="term" value="P:aerobic respiration"/>
    <property type="evidence" value="ECO:0007669"/>
    <property type="project" value="TreeGrafter"/>
</dbReference>
<dbReference type="FunFam" id="3.30.70.3270:FF:000011">
    <property type="entry name" value="NADH-quinone oxidoreductase subunit I"/>
    <property type="match status" value="1"/>
</dbReference>
<dbReference type="Gene3D" id="3.30.70.3270">
    <property type="match status" value="1"/>
</dbReference>
<dbReference type="HAMAP" id="MF_01351">
    <property type="entry name" value="NDH1_NuoI"/>
    <property type="match status" value="1"/>
</dbReference>
<dbReference type="InterPro" id="IPR017896">
    <property type="entry name" value="4Fe4S_Fe-S-bd"/>
</dbReference>
<dbReference type="InterPro" id="IPR017900">
    <property type="entry name" value="4Fe4S_Fe_S_CS"/>
</dbReference>
<dbReference type="InterPro" id="IPR010226">
    <property type="entry name" value="NADH_quinone_OxRdtase_chainI"/>
</dbReference>
<dbReference type="NCBIfam" id="TIGR01971">
    <property type="entry name" value="NuoI"/>
    <property type="match status" value="1"/>
</dbReference>
<dbReference type="NCBIfam" id="NF004542">
    <property type="entry name" value="PRK05888.2-3"/>
    <property type="match status" value="1"/>
</dbReference>
<dbReference type="PANTHER" id="PTHR10849:SF20">
    <property type="entry name" value="NADH DEHYDROGENASE [UBIQUINONE] IRON-SULFUR PROTEIN 8, MITOCHONDRIAL"/>
    <property type="match status" value="1"/>
</dbReference>
<dbReference type="PANTHER" id="PTHR10849">
    <property type="entry name" value="NADH DEHYDROGENASE UBIQUINONE IRON-SULFUR PROTEIN 8, MITOCHONDRIAL"/>
    <property type="match status" value="1"/>
</dbReference>
<dbReference type="Pfam" id="PF12838">
    <property type="entry name" value="Fer4_7"/>
    <property type="match status" value="1"/>
</dbReference>
<dbReference type="SUPFAM" id="SSF54862">
    <property type="entry name" value="4Fe-4S ferredoxins"/>
    <property type="match status" value="1"/>
</dbReference>
<dbReference type="PROSITE" id="PS00198">
    <property type="entry name" value="4FE4S_FER_1"/>
    <property type="match status" value="1"/>
</dbReference>
<dbReference type="PROSITE" id="PS51379">
    <property type="entry name" value="4FE4S_FER_2"/>
    <property type="match status" value="2"/>
</dbReference>
<reference key="1">
    <citation type="journal article" date="2007" name="J. Bacteriol.">
        <title>The complete genome sequence of Campylobacter jejuni strain 81116 (NCTC11828).</title>
        <authorList>
            <person name="Pearson B.M."/>
            <person name="Gaskin D.J.H."/>
            <person name="Segers R.P.A.M."/>
            <person name="Wells J.M."/>
            <person name="Nuijten P.J.M."/>
            <person name="van Vliet A.H.M."/>
        </authorList>
    </citation>
    <scope>NUCLEOTIDE SEQUENCE [LARGE SCALE GENOMIC DNA]</scope>
    <source>
        <strain>81116 / NCTC 11828</strain>
    </source>
</reference>
<protein>
    <recommendedName>
        <fullName evidence="1">NADH-quinone oxidoreductase subunit I</fullName>
        <ecNumber evidence="1">7.1.1.-</ecNumber>
    </recommendedName>
    <alternativeName>
        <fullName evidence="1">NADH dehydrogenase I subunit I</fullName>
    </alternativeName>
    <alternativeName>
        <fullName evidence="1">NDH-1 subunit I</fullName>
    </alternativeName>
</protein>
<accession>A8FNM9</accession>
<organism>
    <name type="scientific">Campylobacter jejuni subsp. jejuni serotype O:6 (strain 81116 / NCTC 11828)</name>
    <dbReference type="NCBI Taxonomy" id="407148"/>
    <lineage>
        <taxon>Bacteria</taxon>
        <taxon>Pseudomonadati</taxon>
        <taxon>Campylobacterota</taxon>
        <taxon>Epsilonproteobacteria</taxon>
        <taxon>Campylobacterales</taxon>
        <taxon>Campylobacteraceae</taxon>
        <taxon>Campylobacter</taxon>
    </lineage>
</organism>
<feature type="chain" id="PRO_1000073377" description="NADH-quinone oxidoreductase subunit I">
    <location>
        <begin position="1"/>
        <end position="213"/>
    </location>
</feature>
<feature type="domain" description="4Fe-4S ferredoxin-type 1" evidence="1">
    <location>
        <begin position="74"/>
        <end position="103"/>
    </location>
</feature>
<feature type="domain" description="4Fe-4S ferredoxin-type 2" evidence="1">
    <location>
        <begin position="113"/>
        <end position="142"/>
    </location>
</feature>
<feature type="binding site" evidence="1">
    <location>
        <position position="83"/>
    </location>
    <ligand>
        <name>[4Fe-4S] cluster</name>
        <dbReference type="ChEBI" id="CHEBI:49883"/>
        <label>1</label>
    </ligand>
</feature>
<feature type="binding site" evidence="1">
    <location>
        <position position="86"/>
    </location>
    <ligand>
        <name>[4Fe-4S] cluster</name>
        <dbReference type="ChEBI" id="CHEBI:49883"/>
        <label>1</label>
    </ligand>
</feature>
<feature type="binding site" evidence="1">
    <location>
        <position position="89"/>
    </location>
    <ligand>
        <name>[4Fe-4S] cluster</name>
        <dbReference type="ChEBI" id="CHEBI:49883"/>
        <label>1</label>
    </ligand>
</feature>
<feature type="binding site" evidence="1">
    <location>
        <position position="93"/>
    </location>
    <ligand>
        <name>[4Fe-4S] cluster</name>
        <dbReference type="ChEBI" id="CHEBI:49883"/>
        <label>2</label>
    </ligand>
</feature>
<feature type="binding site" evidence="1">
    <location>
        <position position="122"/>
    </location>
    <ligand>
        <name>[4Fe-4S] cluster</name>
        <dbReference type="ChEBI" id="CHEBI:49883"/>
        <label>2</label>
    </ligand>
</feature>
<feature type="binding site" evidence="1">
    <location>
        <position position="125"/>
    </location>
    <ligand>
        <name>[4Fe-4S] cluster</name>
        <dbReference type="ChEBI" id="CHEBI:49883"/>
        <label>2</label>
    </ligand>
</feature>
<feature type="binding site" evidence="1">
    <location>
        <position position="128"/>
    </location>
    <ligand>
        <name>[4Fe-4S] cluster</name>
        <dbReference type="ChEBI" id="CHEBI:49883"/>
        <label>2</label>
    </ligand>
</feature>
<feature type="binding site" evidence="1">
    <location>
        <position position="132"/>
    </location>
    <ligand>
        <name>[4Fe-4S] cluster</name>
        <dbReference type="ChEBI" id="CHEBI:49883"/>
        <label>1</label>
    </ligand>
</feature>
<evidence type="ECO:0000255" key="1">
    <source>
        <dbReference type="HAMAP-Rule" id="MF_01351"/>
    </source>
</evidence>
<proteinExistence type="inferred from homology"/>
<sequence length="213" mass="24864">MKNYYLVDEKRKTPVSTWEKISQTFRRSVKLELFVGLFVMMRELLKRNNSATIKYPFEKVKLDNRYRAVHRLMRFIESENERCIGCGLCEKICISNCIRMETSLDENGRKKVGNYSINLGRCIYCGFCAEVCPELAIVHGTEYENAAEQRSYFGYKQDFLTPIDKLKNQVEFEGAGSLRKDADLLVVKTPNYYDVMIERALENQDTQEQGENK</sequence>